<reference key="1">
    <citation type="journal article" date="1980" name="Eur. J. Biochem.">
        <title>The primary structure of histone H1 from sperm of the sea urchin Parechinus angulosus. 1. Chemical and enzymatic fragmentation of the protein and the sequence of amino acids in the four N-terminal cyanogen bromide peptides.</title>
        <authorList>
            <person name="Strickland W.N."/>
            <person name="Strickland M."/>
            <person name="de Groot P.C."/>
            <person name="von Holt C."/>
            <person name="Wittmann-Liebold B."/>
        </authorList>
    </citation>
    <scope>PROTEIN SEQUENCE OF 1-84</scope>
</reference>
<reference key="2">
    <citation type="journal article" date="1980" name="Eur. J. Biochem.">
        <title>The primary structure of histone H1 from sperm of the sea urchin Parechinus angulosus. 2. Sequence of the C-terminal CNBr peptide and the entire primary structure.</title>
        <authorList>
            <person name="Strickland W.N."/>
            <person name="Strickland M."/>
            <person name="Brandt W.F."/>
            <person name="von Holt C."/>
            <person name="Lehmann A."/>
            <person name="Wittmann-Liebold B."/>
        </authorList>
    </citation>
    <scope>PROTEIN SEQUENCE OF 80-248</scope>
</reference>
<sequence>PGSPQKRAASPRKSPRKSPKKSPRKASASPRRKAKRARASTHPPVLEMVQAAITAMKERKGSSAAKIKSYMAANYRVDMNVLAPHVRRALRNGVASGALKQVTGTGASGRFRVGAVAKPKKAKKTSAAAKAKKAKAAAAKKARKAKAAAKRKAALAKKKAAAAKRKAAAKAKKAKKPKKKAAKKAKKPAKKSPKKAKKPAKKSPKKKKAKRSPKKAKKAAGKRKPAAKKARRSPRKAGKRRSPKKARK</sequence>
<name>H1_PARAN</name>
<dbReference type="PIR" id="A91090">
    <property type="entry name" value="HSUR1P"/>
</dbReference>
<dbReference type="SMR" id="P02256"/>
<dbReference type="iPTMnet" id="P02256"/>
<dbReference type="GO" id="GO:0000786">
    <property type="term" value="C:nucleosome"/>
    <property type="evidence" value="ECO:0007669"/>
    <property type="project" value="InterPro"/>
</dbReference>
<dbReference type="GO" id="GO:0005634">
    <property type="term" value="C:nucleus"/>
    <property type="evidence" value="ECO:0007669"/>
    <property type="project" value="UniProtKB-SubCell"/>
</dbReference>
<dbReference type="GO" id="GO:0003677">
    <property type="term" value="F:DNA binding"/>
    <property type="evidence" value="ECO:0007669"/>
    <property type="project" value="UniProtKB-KW"/>
</dbReference>
<dbReference type="GO" id="GO:0030527">
    <property type="term" value="F:structural constituent of chromatin"/>
    <property type="evidence" value="ECO:0007669"/>
    <property type="project" value="InterPro"/>
</dbReference>
<dbReference type="GO" id="GO:0006334">
    <property type="term" value="P:nucleosome assembly"/>
    <property type="evidence" value="ECO:0007669"/>
    <property type="project" value="InterPro"/>
</dbReference>
<dbReference type="CDD" id="cd00073">
    <property type="entry name" value="H15"/>
    <property type="match status" value="1"/>
</dbReference>
<dbReference type="FunFam" id="1.10.10.10:FF:000140">
    <property type="entry name" value="Histone H1.0"/>
    <property type="match status" value="1"/>
</dbReference>
<dbReference type="Gene3D" id="1.10.10.10">
    <property type="entry name" value="Winged helix-like DNA-binding domain superfamily/Winged helix DNA-binding domain"/>
    <property type="match status" value="1"/>
</dbReference>
<dbReference type="InterPro" id="IPR005819">
    <property type="entry name" value="H1/H5"/>
</dbReference>
<dbReference type="InterPro" id="IPR005818">
    <property type="entry name" value="Histone_H1/H5_H15"/>
</dbReference>
<dbReference type="InterPro" id="IPR036388">
    <property type="entry name" value="WH-like_DNA-bd_sf"/>
</dbReference>
<dbReference type="InterPro" id="IPR036390">
    <property type="entry name" value="WH_DNA-bd_sf"/>
</dbReference>
<dbReference type="Pfam" id="PF00538">
    <property type="entry name" value="Linker_histone"/>
    <property type="match status" value="1"/>
</dbReference>
<dbReference type="PRINTS" id="PR00624">
    <property type="entry name" value="HISTONEH5"/>
</dbReference>
<dbReference type="SMART" id="SM00526">
    <property type="entry name" value="H15"/>
    <property type="match status" value="1"/>
</dbReference>
<dbReference type="SUPFAM" id="SSF46785">
    <property type="entry name" value="Winged helix' DNA-binding domain"/>
    <property type="match status" value="1"/>
</dbReference>
<dbReference type="PROSITE" id="PS51504">
    <property type="entry name" value="H15"/>
    <property type="match status" value="1"/>
</dbReference>
<organism>
    <name type="scientific">Parechinus angulosus</name>
    <name type="common">Angulate sea urchin</name>
    <name type="synonym">Cidaris angulosus</name>
    <dbReference type="NCBI Taxonomy" id="7658"/>
    <lineage>
        <taxon>Eukaryota</taxon>
        <taxon>Metazoa</taxon>
        <taxon>Echinodermata</taxon>
        <taxon>Eleutherozoa</taxon>
        <taxon>Echinozoa</taxon>
        <taxon>Echinoidea</taxon>
        <taxon>Euechinoidea</taxon>
        <taxon>Echinacea</taxon>
        <taxon>Camarodonta</taxon>
        <taxon>Echinidea</taxon>
        <taxon>Echinidae</taxon>
        <taxon>Parechinus</taxon>
    </lineage>
</organism>
<accession>P02256</accession>
<protein>
    <recommendedName>
        <fullName>Histone H1, gonadal</fullName>
    </recommendedName>
</protein>
<evidence type="ECO:0000255" key="1">
    <source>
        <dbReference type="PROSITE-ProRule" id="PRU00837"/>
    </source>
</evidence>
<evidence type="ECO:0000256" key="2">
    <source>
        <dbReference type="SAM" id="MobiDB-lite"/>
    </source>
</evidence>
<keyword id="KW-0158">Chromosome</keyword>
<keyword id="KW-0903">Direct protein sequencing</keyword>
<keyword id="KW-0238">DNA-binding</keyword>
<keyword id="KW-0539">Nucleus</keyword>
<proteinExistence type="evidence at protein level"/>
<feature type="chain" id="PRO_0000195942" description="Histone H1, gonadal">
    <location>
        <begin position="1"/>
        <end position="248"/>
    </location>
</feature>
<feature type="domain" description="H15" evidence="1">
    <location>
        <begin position="41"/>
        <end position="115"/>
    </location>
</feature>
<feature type="region of interest" description="Disordered" evidence="2">
    <location>
        <begin position="1"/>
        <end position="46"/>
    </location>
</feature>
<feature type="region of interest" description="Disordered" evidence="2">
    <location>
        <begin position="115"/>
        <end position="248"/>
    </location>
</feature>
<feature type="compositionally biased region" description="Basic residues" evidence="2">
    <location>
        <begin position="9"/>
        <end position="39"/>
    </location>
</feature>
<feature type="compositionally biased region" description="Basic residues" evidence="2">
    <location>
        <begin position="118"/>
        <end position="248"/>
    </location>
</feature>
<feature type="sequence variant">
    <original>K</original>
    <variation>R</variation>
    <location>
        <position position="144"/>
    </location>
</feature>
<comment type="function">
    <text>Histones H1 are necessary for the condensation of nucleosome chains into higher-order structures.</text>
</comment>
<comment type="subcellular location">
    <subcellularLocation>
        <location>Nucleus</location>
    </subcellularLocation>
    <subcellularLocation>
        <location>Chromosome</location>
    </subcellularLocation>
</comment>
<comment type="tissue specificity">
    <text>Sperm.</text>
</comment>
<comment type="similarity">
    <text evidence="1">Belongs to the histone H1/H5 family.</text>
</comment>